<dbReference type="EC" id="5.1.3.29" evidence="1"/>
<dbReference type="EMBL" id="CP000970">
    <property type="protein sequence ID" value="ACB19780.1"/>
    <property type="molecule type" value="Genomic_DNA"/>
</dbReference>
<dbReference type="RefSeq" id="WP_000920840.1">
    <property type="nucleotide sequence ID" value="NC_010498.1"/>
</dbReference>
<dbReference type="SMR" id="B1LQZ8"/>
<dbReference type="GeneID" id="93779194"/>
<dbReference type="KEGG" id="ecm:EcSMS35_2945"/>
<dbReference type="HOGENOM" id="CLU_120075_1_0_6"/>
<dbReference type="UniPathway" id="UPA00956"/>
<dbReference type="Proteomes" id="UP000007011">
    <property type="component" value="Chromosome"/>
</dbReference>
<dbReference type="GO" id="GO:0005737">
    <property type="term" value="C:cytoplasm"/>
    <property type="evidence" value="ECO:0007669"/>
    <property type="project" value="UniProtKB-SubCell"/>
</dbReference>
<dbReference type="GO" id="GO:0042806">
    <property type="term" value="F:fucose binding"/>
    <property type="evidence" value="ECO:0007669"/>
    <property type="project" value="InterPro"/>
</dbReference>
<dbReference type="GO" id="GO:0036373">
    <property type="term" value="F:L-fucose mutarotase activity"/>
    <property type="evidence" value="ECO:0007669"/>
    <property type="project" value="UniProtKB-EC"/>
</dbReference>
<dbReference type="GO" id="GO:0036065">
    <property type="term" value="P:fucosylation"/>
    <property type="evidence" value="ECO:0007669"/>
    <property type="project" value="TreeGrafter"/>
</dbReference>
<dbReference type="GO" id="GO:0042354">
    <property type="term" value="P:L-fucose metabolic process"/>
    <property type="evidence" value="ECO:0007669"/>
    <property type="project" value="UniProtKB-UniRule"/>
</dbReference>
<dbReference type="FunFam" id="3.40.1650.10:FF:000001">
    <property type="entry name" value="L-fucose mutarotase"/>
    <property type="match status" value="1"/>
</dbReference>
<dbReference type="Gene3D" id="3.40.1650.10">
    <property type="entry name" value="RbsD-like domain"/>
    <property type="match status" value="1"/>
</dbReference>
<dbReference type="HAMAP" id="MF_01662">
    <property type="entry name" value="L_fucose_rotase"/>
    <property type="match status" value="1"/>
</dbReference>
<dbReference type="InterPro" id="IPR023751">
    <property type="entry name" value="L-fucose_mutarotase"/>
</dbReference>
<dbReference type="InterPro" id="IPR023750">
    <property type="entry name" value="RbsD-like_sf"/>
</dbReference>
<dbReference type="InterPro" id="IPR050443">
    <property type="entry name" value="RbsD/FucU_mutarotase"/>
</dbReference>
<dbReference type="InterPro" id="IPR007721">
    <property type="entry name" value="RbsD_FucU"/>
</dbReference>
<dbReference type="NCBIfam" id="NF011949">
    <property type="entry name" value="PRK15420.1"/>
    <property type="match status" value="1"/>
</dbReference>
<dbReference type="PANTHER" id="PTHR31690">
    <property type="entry name" value="FUCOSE MUTAROTASE"/>
    <property type="match status" value="1"/>
</dbReference>
<dbReference type="PANTHER" id="PTHR31690:SF4">
    <property type="entry name" value="FUCOSE MUTAROTASE"/>
    <property type="match status" value="1"/>
</dbReference>
<dbReference type="Pfam" id="PF05025">
    <property type="entry name" value="RbsD_FucU"/>
    <property type="match status" value="1"/>
</dbReference>
<dbReference type="SUPFAM" id="SSF102546">
    <property type="entry name" value="RbsD-like"/>
    <property type="match status" value="1"/>
</dbReference>
<feature type="chain" id="PRO_0000344540" description="L-fucose mutarotase">
    <location>
        <begin position="1"/>
        <end position="140"/>
    </location>
</feature>
<feature type="active site" description="Proton donor" evidence="1">
    <location>
        <position position="22"/>
    </location>
</feature>
<feature type="binding site" evidence="1">
    <location>
        <position position="30"/>
    </location>
    <ligand>
        <name>substrate</name>
    </ligand>
</feature>
<feature type="binding site" evidence="1">
    <location>
        <position position="107"/>
    </location>
    <ligand>
        <name>substrate</name>
    </ligand>
</feature>
<feature type="binding site" evidence="1">
    <location>
        <begin position="129"/>
        <end position="131"/>
    </location>
    <ligand>
        <name>substrate</name>
    </ligand>
</feature>
<proteinExistence type="inferred from homology"/>
<accession>B1LQZ8</accession>
<organism>
    <name type="scientific">Escherichia coli (strain SMS-3-5 / SECEC)</name>
    <dbReference type="NCBI Taxonomy" id="439855"/>
    <lineage>
        <taxon>Bacteria</taxon>
        <taxon>Pseudomonadati</taxon>
        <taxon>Pseudomonadota</taxon>
        <taxon>Gammaproteobacteria</taxon>
        <taxon>Enterobacterales</taxon>
        <taxon>Enterobacteriaceae</taxon>
        <taxon>Escherichia</taxon>
    </lineage>
</organism>
<comment type="function">
    <text evidence="1">Involved in the anomeric conversion of L-fucose.</text>
</comment>
<comment type="catalytic activity">
    <reaction evidence="1">
        <text>alpha-L-fucose = beta-L-fucose</text>
        <dbReference type="Rhea" id="RHEA:25580"/>
        <dbReference type="ChEBI" id="CHEBI:42548"/>
        <dbReference type="ChEBI" id="CHEBI:42589"/>
        <dbReference type="EC" id="5.1.3.29"/>
    </reaction>
</comment>
<comment type="pathway">
    <text evidence="1">Carbohydrate metabolism; L-fucose metabolism.</text>
</comment>
<comment type="subunit">
    <text evidence="1">Homodecamer.</text>
</comment>
<comment type="subcellular location">
    <subcellularLocation>
        <location evidence="1">Cytoplasm</location>
    </subcellularLocation>
</comment>
<comment type="similarity">
    <text evidence="1">Belongs to the RbsD / FucU family. FucU mutarotase subfamily.</text>
</comment>
<name>FUCM_ECOSM</name>
<protein>
    <recommendedName>
        <fullName evidence="1">L-fucose mutarotase</fullName>
        <ecNumber evidence="1">5.1.3.29</ecNumber>
    </recommendedName>
    <alternativeName>
        <fullName evidence="1">Fucose 1-epimerase</fullName>
    </alternativeName>
    <alternativeName>
        <fullName evidence="1">Type-2 mutarotase</fullName>
    </alternativeName>
</protein>
<evidence type="ECO:0000255" key="1">
    <source>
        <dbReference type="HAMAP-Rule" id="MF_01662"/>
    </source>
</evidence>
<sequence>MLKTISPLISPELLKVLAEMGHGDEIIFSDAHFPAHSMGPQVIRADGLLVSDLLQAIIPLFELDSYAPPLVMMAAVEGDTLDPEVERRYRNALSLQAPCPDIIRINRFAFYERAQKAFAIVITGERAKYGNILLKKGVTP</sequence>
<gene>
    <name evidence="1" type="primary">fucU</name>
    <name type="ordered locus">EcSMS35_2945</name>
</gene>
<reference key="1">
    <citation type="journal article" date="2008" name="J. Bacteriol.">
        <title>Insights into the environmental resistance gene pool from the genome sequence of the multidrug-resistant environmental isolate Escherichia coli SMS-3-5.</title>
        <authorList>
            <person name="Fricke W.F."/>
            <person name="Wright M.S."/>
            <person name="Lindell A.H."/>
            <person name="Harkins D.M."/>
            <person name="Baker-Austin C."/>
            <person name="Ravel J."/>
            <person name="Stepanauskas R."/>
        </authorList>
    </citation>
    <scope>NUCLEOTIDE SEQUENCE [LARGE SCALE GENOMIC DNA]</scope>
    <source>
        <strain>SMS-3-5 / SECEC</strain>
    </source>
</reference>
<keyword id="KW-0119">Carbohydrate metabolism</keyword>
<keyword id="KW-0963">Cytoplasm</keyword>
<keyword id="KW-0294">Fucose metabolism</keyword>
<keyword id="KW-0413">Isomerase</keyword>